<feature type="chain" id="PRO_1000136940" description="Cell division protein ZapD">
    <location>
        <begin position="1"/>
        <end position="247"/>
    </location>
</feature>
<proteinExistence type="inferred from homology"/>
<protein>
    <recommendedName>
        <fullName evidence="1">Cell division protein ZapD</fullName>
    </recommendedName>
    <alternativeName>
        <fullName evidence="1">Z ring-associated protein D</fullName>
    </alternativeName>
</protein>
<keyword id="KW-0131">Cell cycle</keyword>
<keyword id="KW-0132">Cell division</keyword>
<keyword id="KW-0963">Cytoplasm</keyword>
<keyword id="KW-0717">Septation</keyword>
<name>ZAPD_ECOLU</name>
<evidence type="ECO:0000255" key="1">
    <source>
        <dbReference type="HAMAP-Rule" id="MF_01092"/>
    </source>
</evidence>
<accession>B7N7X3</accession>
<dbReference type="EMBL" id="CU928163">
    <property type="protein sequence ID" value="CAR11323.1"/>
    <property type="molecule type" value="Genomic_DNA"/>
</dbReference>
<dbReference type="RefSeq" id="WP_001194720.1">
    <property type="nucleotide sequence ID" value="NC_011751.1"/>
</dbReference>
<dbReference type="RefSeq" id="YP_002410879.1">
    <property type="nucleotide sequence ID" value="NC_011751.1"/>
</dbReference>
<dbReference type="SMR" id="B7N7X3"/>
<dbReference type="STRING" id="585056.ECUMN_0100"/>
<dbReference type="KEGG" id="eum:ECUMN_0100"/>
<dbReference type="PATRIC" id="fig|585056.7.peg.292"/>
<dbReference type="HOGENOM" id="CLU_076303_0_0_6"/>
<dbReference type="Proteomes" id="UP000007097">
    <property type="component" value="Chromosome"/>
</dbReference>
<dbReference type="GO" id="GO:0032153">
    <property type="term" value="C:cell division site"/>
    <property type="evidence" value="ECO:0007669"/>
    <property type="project" value="TreeGrafter"/>
</dbReference>
<dbReference type="GO" id="GO:0005737">
    <property type="term" value="C:cytoplasm"/>
    <property type="evidence" value="ECO:0007669"/>
    <property type="project" value="UniProtKB-SubCell"/>
</dbReference>
<dbReference type="GO" id="GO:0000917">
    <property type="term" value="P:division septum assembly"/>
    <property type="evidence" value="ECO:0007669"/>
    <property type="project" value="UniProtKB-KW"/>
</dbReference>
<dbReference type="GO" id="GO:0043093">
    <property type="term" value="P:FtsZ-dependent cytokinesis"/>
    <property type="evidence" value="ECO:0007669"/>
    <property type="project" value="UniProtKB-UniRule"/>
</dbReference>
<dbReference type="FunFam" id="1.10.3900.10:FF:000001">
    <property type="entry name" value="Cell division protein ZapD"/>
    <property type="match status" value="1"/>
</dbReference>
<dbReference type="FunFam" id="2.60.440.10:FF:000001">
    <property type="entry name" value="Cell division protein ZapD"/>
    <property type="match status" value="1"/>
</dbReference>
<dbReference type="Gene3D" id="1.10.3900.10">
    <property type="entry name" value="YacF-like"/>
    <property type="match status" value="1"/>
</dbReference>
<dbReference type="Gene3D" id="2.60.440.10">
    <property type="entry name" value="YacF-like domains"/>
    <property type="match status" value="1"/>
</dbReference>
<dbReference type="HAMAP" id="MF_01092">
    <property type="entry name" value="ZapD"/>
    <property type="match status" value="1"/>
</dbReference>
<dbReference type="InterPro" id="IPR009777">
    <property type="entry name" value="ZapD"/>
</dbReference>
<dbReference type="InterPro" id="IPR027462">
    <property type="entry name" value="ZapD_C"/>
</dbReference>
<dbReference type="InterPro" id="IPR036268">
    <property type="entry name" value="ZapD_sf"/>
</dbReference>
<dbReference type="NCBIfam" id="NF003653">
    <property type="entry name" value="PRK05287.1-1"/>
    <property type="match status" value="1"/>
</dbReference>
<dbReference type="NCBIfam" id="NF003655">
    <property type="entry name" value="PRK05287.1-3"/>
    <property type="match status" value="1"/>
</dbReference>
<dbReference type="PANTHER" id="PTHR39455">
    <property type="entry name" value="CELL DIVISION PROTEIN ZAPD"/>
    <property type="match status" value="1"/>
</dbReference>
<dbReference type="PANTHER" id="PTHR39455:SF1">
    <property type="entry name" value="CELL DIVISION PROTEIN ZAPD"/>
    <property type="match status" value="1"/>
</dbReference>
<dbReference type="Pfam" id="PF07072">
    <property type="entry name" value="ZapD"/>
    <property type="match status" value="1"/>
</dbReference>
<dbReference type="SUPFAM" id="SSF160950">
    <property type="entry name" value="YacF-like"/>
    <property type="match status" value="1"/>
</dbReference>
<sequence>MQTQVLFEHPLNEKMRTWLRIEFLIQQLTVNLPIADHAGALHFFRNVSELLDVFERGEVRTELLKELDRQQRKLQTWIGVPGVDQSRIEALIQQLKAAGSVLISAPRIGQFLREDRLIALVRQRLSIPGGCCSFDLPSLHIWLHLPQAQRDSQVETWIASLNPLTQALTMVLDLIRQSAPFRKQTSLNGFYQDNGGDADLLRLNLSLDSQLYPQISGHKSRFAIRFMPLDSENGQVPERLDFELACC</sequence>
<comment type="function">
    <text evidence="1">Cell division factor that enhances FtsZ-ring assembly. Directly interacts with FtsZ and promotes bundling of FtsZ protofilaments, with a reduction in FtsZ GTPase activity.</text>
</comment>
<comment type="subunit">
    <text evidence="1">Interacts with FtsZ.</text>
</comment>
<comment type="subcellular location">
    <subcellularLocation>
        <location evidence="1">Cytoplasm</location>
    </subcellularLocation>
    <text evidence="1">Localizes to mid-cell in an FtsZ-dependent manner.</text>
</comment>
<comment type="similarity">
    <text evidence="1">Belongs to the ZapD family.</text>
</comment>
<reference key="1">
    <citation type="journal article" date="2009" name="PLoS Genet.">
        <title>Organised genome dynamics in the Escherichia coli species results in highly diverse adaptive paths.</title>
        <authorList>
            <person name="Touchon M."/>
            <person name="Hoede C."/>
            <person name="Tenaillon O."/>
            <person name="Barbe V."/>
            <person name="Baeriswyl S."/>
            <person name="Bidet P."/>
            <person name="Bingen E."/>
            <person name="Bonacorsi S."/>
            <person name="Bouchier C."/>
            <person name="Bouvet O."/>
            <person name="Calteau A."/>
            <person name="Chiapello H."/>
            <person name="Clermont O."/>
            <person name="Cruveiller S."/>
            <person name="Danchin A."/>
            <person name="Diard M."/>
            <person name="Dossat C."/>
            <person name="Karoui M.E."/>
            <person name="Frapy E."/>
            <person name="Garry L."/>
            <person name="Ghigo J.M."/>
            <person name="Gilles A.M."/>
            <person name="Johnson J."/>
            <person name="Le Bouguenec C."/>
            <person name="Lescat M."/>
            <person name="Mangenot S."/>
            <person name="Martinez-Jehanne V."/>
            <person name="Matic I."/>
            <person name="Nassif X."/>
            <person name="Oztas S."/>
            <person name="Petit M.A."/>
            <person name="Pichon C."/>
            <person name="Rouy Z."/>
            <person name="Ruf C.S."/>
            <person name="Schneider D."/>
            <person name="Tourret J."/>
            <person name="Vacherie B."/>
            <person name="Vallenet D."/>
            <person name="Medigue C."/>
            <person name="Rocha E.P.C."/>
            <person name="Denamur E."/>
        </authorList>
    </citation>
    <scope>NUCLEOTIDE SEQUENCE [LARGE SCALE GENOMIC DNA]</scope>
    <source>
        <strain>UMN026 / ExPEC</strain>
    </source>
</reference>
<organism>
    <name type="scientific">Escherichia coli O17:K52:H18 (strain UMN026 / ExPEC)</name>
    <dbReference type="NCBI Taxonomy" id="585056"/>
    <lineage>
        <taxon>Bacteria</taxon>
        <taxon>Pseudomonadati</taxon>
        <taxon>Pseudomonadota</taxon>
        <taxon>Gammaproteobacteria</taxon>
        <taxon>Enterobacterales</taxon>
        <taxon>Enterobacteriaceae</taxon>
        <taxon>Escherichia</taxon>
    </lineage>
</organism>
<gene>
    <name evidence="1" type="primary">zapD</name>
    <name type="ordered locus">ECUMN_0100</name>
</gene>